<evidence type="ECO:0000255" key="1">
    <source>
        <dbReference type="HAMAP-Rule" id="MF_01581"/>
    </source>
</evidence>
<reference key="1">
    <citation type="journal article" date="2009" name="PLoS Genet.">
        <title>Organised genome dynamics in the Escherichia coli species results in highly diverse adaptive paths.</title>
        <authorList>
            <person name="Touchon M."/>
            <person name="Hoede C."/>
            <person name="Tenaillon O."/>
            <person name="Barbe V."/>
            <person name="Baeriswyl S."/>
            <person name="Bidet P."/>
            <person name="Bingen E."/>
            <person name="Bonacorsi S."/>
            <person name="Bouchier C."/>
            <person name="Bouvet O."/>
            <person name="Calteau A."/>
            <person name="Chiapello H."/>
            <person name="Clermont O."/>
            <person name="Cruveiller S."/>
            <person name="Danchin A."/>
            <person name="Diard M."/>
            <person name="Dossat C."/>
            <person name="Karoui M.E."/>
            <person name="Frapy E."/>
            <person name="Garry L."/>
            <person name="Ghigo J.M."/>
            <person name="Gilles A.M."/>
            <person name="Johnson J."/>
            <person name="Le Bouguenec C."/>
            <person name="Lescat M."/>
            <person name="Mangenot S."/>
            <person name="Martinez-Jehanne V."/>
            <person name="Matic I."/>
            <person name="Nassif X."/>
            <person name="Oztas S."/>
            <person name="Petit M.A."/>
            <person name="Pichon C."/>
            <person name="Rouy Z."/>
            <person name="Ruf C.S."/>
            <person name="Schneider D."/>
            <person name="Tourret J."/>
            <person name="Vacherie B."/>
            <person name="Vallenet D."/>
            <person name="Medigue C."/>
            <person name="Rocha E.P.C."/>
            <person name="Denamur E."/>
        </authorList>
    </citation>
    <scope>NUCLEOTIDE SEQUENCE [LARGE SCALE GENOMIC DNA]</scope>
    <source>
        <strain>ATCC 35469 / DSM 13698 / BCRC 15582 / CCUG 18766 / IAM 14443 / JCM 21226 / LMG 7866 / NBRC 102419 / NCTC 12128 / CDC 0568-73</strain>
    </source>
</reference>
<dbReference type="EMBL" id="CU928158">
    <property type="protein sequence ID" value="CAQ89042.1"/>
    <property type="molecule type" value="Genomic_DNA"/>
</dbReference>
<dbReference type="RefSeq" id="WP_001024043.1">
    <property type="nucleotide sequence ID" value="NC_011740.1"/>
</dbReference>
<dbReference type="GeneID" id="75057433"/>
<dbReference type="KEGG" id="efe:EFER_1523"/>
<dbReference type="HOGENOM" id="CLU_167574_0_0_6"/>
<dbReference type="OrthoDB" id="6455281at2"/>
<dbReference type="Proteomes" id="UP000000745">
    <property type="component" value="Chromosome"/>
</dbReference>
<dbReference type="HAMAP" id="MF_01581">
    <property type="entry name" value="UPF0482"/>
    <property type="match status" value="1"/>
</dbReference>
<dbReference type="InterPro" id="IPR009700">
    <property type="entry name" value="DUF1283"/>
</dbReference>
<dbReference type="NCBIfam" id="NF010180">
    <property type="entry name" value="PRK13659.1"/>
    <property type="match status" value="1"/>
</dbReference>
<dbReference type="Pfam" id="PF06932">
    <property type="entry name" value="DUF1283"/>
    <property type="match status" value="1"/>
</dbReference>
<name>YNFB_ESCF3</name>
<proteinExistence type="inferred from homology"/>
<sequence>MNILSGKLPFLLGAVFAGSVVLATSVQAETSKLIIESGDSAQSRQHASMEKEQWNDTRMLRQKVNKRTEKEWDKADAAFDNRDKCEQSSNINAYWEPNTLRCLDRRTGRVITP</sequence>
<keyword id="KW-0732">Signal</keyword>
<organism>
    <name type="scientific">Escherichia fergusonii (strain ATCC 35469 / DSM 13698 / CCUG 18766 / IAM 14443 / JCM 21226 / LMG 7866 / NBRC 102419 / NCTC 12128 / CDC 0568-73)</name>
    <dbReference type="NCBI Taxonomy" id="585054"/>
    <lineage>
        <taxon>Bacteria</taxon>
        <taxon>Pseudomonadati</taxon>
        <taxon>Pseudomonadota</taxon>
        <taxon>Gammaproteobacteria</taxon>
        <taxon>Enterobacterales</taxon>
        <taxon>Enterobacteriaceae</taxon>
        <taxon>Escherichia</taxon>
    </lineage>
</organism>
<accession>B7LRA0</accession>
<gene>
    <name evidence="1" type="primary">ynfB</name>
    <name type="ordered locus">EFER_1523</name>
</gene>
<feature type="signal peptide" evidence="1">
    <location>
        <begin position="1"/>
        <end position="28"/>
    </location>
</feature>
<feature type="chain" id="PRO_1000201003" description="UPF0482 protein YnfB">
    <location>
        <begin position="29"/>
        <end position="113"/>
    </location>
</feature>
<comment type="similarity">
    <text evidence="1">Belongs to the UPF0482 family.</text>
</comment>
<protein>
    <recommendedName>
        <fullName evidence="1">UPF0482 protein YnfB</fullName>
    </recommendedName>
</protein>